<dbReference type="EC" id="6.3.2.-" evidence="1"/>
<dbReference type="EMBL" id="AE006468">
    <property type="protein sequence ID" value="AAL19811.1"/>
    <property type="molecule type" value="Genomic_DNA"/>
</dbReference>
<dbReference type="EMBL" id="AF117952">
    <property type="protein sequence ID" value="AAD18028.1"/>
    <property type="molecule type" value="Genomic_DNA"/>
</dbReference>
<dbReference type="RefSeq" id="NP_459852.1">
    <property type="nucleotide sequence ID" value="NC_003197.2"/>
</dbReference>
<dbReference type="RefSeq" id="WP_000684361.1">
    <property type="nucleotide sequence ID" value="NC_003197.2"/>
</dbReference>
<dbReference type="SMR" id="P0A2U2"/>
<dbReference type="STRING" id="99287.STM0875"/>
<dbReference type="PaxDb" id="99287-STM0875"/>
<dbReference type="GeneID" id="1252394"/>
<dbReference type="KEGG" id="stm:STM0875"/>
<dbReference type="PATRIC" id="fig|99287.12.peg.914"/>
<dbReference type="HOGENOM" id="CLU_054353_0_1_6"/>
<dbReference type="OMA" id="CYMNIAS"/>
<dbReference type="PhylomeDB" id="P0A2U2"/>
<dbReference type="BioCyc" id="SENT99287:STM0875-MONOMER"/>
<dbReference type="Proteomes" id="UP000001014">
    <property type="component" value="Chromosome"/>
</dbReference>
<dbReference type="GO" id="GO:0005737">
    <property type="term" value="C:cytoplasm"/>
    <property type="evidence" value="ECO:0000318"/>
    <property type="project" value="GO_Central"/>
</dbReference>
<dbReference type="GO" id="GO:0005524">
    <property type="term" value="F:ATP binding"/>
    <property type="evidence" value="ECO:0007669"/>
    <property type="project" value="UniProtKB-UniRule"/>
</dbReference>
<dbReference type="GO" id="GO:0046872">
    <property type="term" value="F:metal ion binding"/>
    <property type="evidence" value="ECO:0007669"/>
    <property type="project" value="UniProtKB-KW"/>
</dbReference>
<dbReference type="GO" id="GO:0018169">
    <property type="term" value="F:ribosomal S6-glutamic acid ligase activity"/>
    <property type="evidence" value="ECO:0000318"/>
    <property type="project" value="GO_Central"/>
</dbReference>
<dbReference type="GO" id="GO:0036211">
    <property type="term" value="P:protein modification process"/>
    <property type="evidence" value="ECO:0007669"/>
    <property type="project" value="InterPro"/>
</dbReference>
<dbReference type="GO" id="GO:0009432">
    <property type="term" value="P:SOS response"/>
    <property type="evidence" value="ECO:0000318"/>
    <property type="project" value="GO_Central"/>
</dbReference>
<dbReference type="GO" id="GO:0006412">
    <property type="term" value="P:translation"/>
    <property type="evidence" value="ECO:0007669"/>
    <property type="project" value="UniProtKB-KW"/>
</dbReference>
<dbReference type="FunFam" id="3.40.50.20:FF:000004">
    <property type="entry name" value="Probable alpha-L-glutamate ligase"/>
    <property type="match status" value="1"/>
</dbReference>
<dbReference type="FunFam" id="3.30.1490.20:FF:000005">
    <property type="entry name" value="Probable alpha-L-glutamate ligase 1"/>
    <property type="match status" value="1"/>
</dbReference>
<dbReference type="FunFam" id="3.30.470.20:FF:000016">
    <property type="entry name" value="Ribosomal protein S6--L-glutamate ligase"/>
    <property type="match status" value="1"/>
</dbReference>
<dbReference type="Gene3D" id="3.40.50.20">
    <property type="match status" value="1"/>
</dbReference>
<dbReference type="Gene3D" id="3.30.1490.20">
    <property type="entry name" value="ATP-grasp fold, A domain"/>
    <property type="match status" value="1"/>
</dbReference>
<dbReference type="Gene3D" id="3.30.470.20">
    <property type="entry name" value="ATP-grasp fold, B domain"/>
    <property type="match status" value="1"/>
</dbReference>
<dbReference type="HAMAP" id="MF_01552">
    <property type="entry name" value="RimK"/>
    <property type="match status" value="1"/>
</dbReference>
<dbReference type="InterPro" id="IPR011761">
    <property type="entry name" value="ATP-grasp"/>
</dbReference>
<dbReference type="InterPro" id="IPR013651">
    <property type="entry name" value="ATP-grasp_RimK-type"/>
</dbReference>
<dbReference type="InterPro" id="IPR013815">
    <property type="entry name" value="ATP_grasp_subdomain_1"/>
</dbReference>
<dbReference type="InterPro" id="IPR023533">
    <property type="entry name" value="RimK"/>
</dbReference>
<dbReference type="InterPro" id="IPR041107">
    <property type="entry name" value="Rimk_N"/>
</dbReference>
<dbReference type="InterPro" id="IPR004666">
    <property type="entry name" value="Rp_bS6_RimK/Lys_biosynth_LsyX"/>
</dbReference>
<dbReference type="NCBIfam" id="NF007764">
    <property type="entry name" value="PRK10446.1"/>
    <property type="match status" value="1"/>
</dbReference>
<dbReference type="NCBIfam" id="TIGR00768">
    <property type="entry name" value="rimK_fam"/>
    <property type="match status" value="1"/>
</dbReference>
<dbReference type="PANTHER" id="PTHR21621:SF7">
    <property type="entry name" value="RIBOSOMAL PROTEIN BS6--L-GLUTAMATE LIGASE"/>
    <property type="match status" value="1"/>
</dbReference>
<dbReference type="PANTHER" id="PTHR21621">
    <property type="entry name" value="RIBOSOMAL PROTEIN S6 MODIFICATION PROTEIN"/>
    <property type="match status" value="1"/>
</dbReference>
<dbReference type="Pfam" id="PF08443">
    <property type="entry name" value="RimK"/>
    <property type="match status" value="1"/>
</dbReference>
<dbReference type="Pfam" id="PF18030">
    <property type="entry name" value="Rimk_N"/>
    <property type="match status" value="1"/>
</dbReference>
<dbReference type="SUPFAM" id="SSF56059">
    <property type="entry name" value="Glutathione synthetase ATP-binding domain-like"/>
    <property type="match status" value="1"/>
</dbReference>
<dbReference type="PROSITE" id="PS50975">
    <property type="entry name" value="ATP_GRASP"/>
    <property type="match status" value="1"/>
</dbReference>
<sequence length="300" mass="32294">MKIAILSRDGTLYSCKRLREAAMRRGHLVEILDPLSCYMNINPAASSIHYKGRRLPHFDAVIPRIGSAITFYGTAALRQFELLGSYPLNESVAITRARDKLRSLQLLARQGIDLPITGIAHSPDDTSDLIKMVGGAPLVVKLVEGTQGIGVVLAETRQAAESVIDAFRGLNAHILVQEYIAEAKGCDIRCLVVGNEVVAAIERCAKAGDFRSNLHRGGVASIATITPRERDIAIKAAQTLGLDVAGVDILRAARGPLVMEVNASPGLEGIEKTTGVDIAGRMIQWIERHATPEFCLKIGG</sequence>
<name>RIMK_SALTY</name>
<keyword id="KW-0067">ATP-binding</keyword>
<keyword id="KW-0436">Ligase</keyword>
<keyword id="KW-0460">Magnesium</keyword>
<keyword id="KW-0464">Manganese</keyword>
<keyword id="KW-0479">Metal-binding</keyword>
<keyword id="KW-0547">Nucleotide-binding</keyword>
<keyword id="KW-0648">Protein biosynthesis</keyword>
<keyword id="KW-1185">Reference proteome</keyword>
<reference key="1">
    <citation type="journal article" date="2001" name="Nature">
        <title>Complete genome sequence of Salmonella enterica serovar Typhimurium LT2.</title>
        <authorList>
            <person name="McClelland M."/>
            <person name="Sanderson K.E."/>
            <person name="Spieth J."/>
            <person name="Clifton S.W."/>
            <person name="Latreille P."/>
            <person name="Courtney L."/>
            <person name="Porwollik S."/>
            <person name="Ali J."/>
            <person name="Dante M."/>
            <person name="Du F."/>
            <person name="Hou S."/>
            <person name="Layman D."/>
            <person name="Leonard S."/>
            <person name="Nguyen C."/>
            <person name="Scott K."/>
            <person name="Holmes A."/>
            <person name="Grewal N."/>
            <person name="Mulvaney E."/>
            <person name="Ryan E."/>
            <person name="Sun H."/>
            <person name="Florea L."/>
            <person name="Miller W."/>
            <person name="Stoneking T."/>
            <person name="Nhan M."/>
            <person name="Waterston R."/>
            <person name="Wilson R.K."/>
        </authorList>
    </citation>
    <scope>NUCLEOTIDE SEQUENCE [LARGE SCALE GENOMIC DNA]</scope>
    <source>
        <strain>LT2 / SGSC1412 / ATCC 700720</strain>
    </source>
</reference>
<reference key="2">
    <citation type="submission" date="1999-01" db="EMBL/GenBank/DDBJ databases">
        <title>Cloning and characterization of the major nitrotreductase from Salmonella typhimurium TA1535.</title>
        <authorList>
            <person name="Lambert I.B."/>
            <person name="Boroumandi S."/>
            <person name="Nokhbeh M.R."/>
            <person name="Pokorny N.S."/>
            <person name="Koziarz P."/>
        </authorList>
    </citation>
    <scope>NUCLEOTIDE SEQUENCE [GENOMIC DNA] OF 1-74</scope>
    <source>
        <strain>ATCC 29629 / TA 1535</strain>
    </source>
</reference>
<organism>
    <name type="scientific">Salmonella typhimurium (strain LT2 / SGSC1412 / ATCC 700720)</name>
    <dbReference type="NCBI Taxonomy" id="99287"/>
    <lineage>
        <taxon>Bacteria</taxon>
        <taxon>Pseudomonadati</taxon>
        <taxon>Pseudomonadota</taxon>
        <taxon>Gammaproteobacteria</taxon>
        <taxon>Enterobacterales</taxon>
        <taxon>Enterobacteriaceae</taxon>
        <taxon>Salmonella</taxon>
    </lineage>
</organism>
<comment type="function">
    <text evidence="1">An L-glutamate ligase that catalyzes the ATP-dependent post-translational addition of glutamate residues to the C-terminus of ribosomal protein bS6 (RpsF). Is also able to catalyze the synthesis of poly-alpha-glutamate in vitro, via ATP hydrolysis from unprotected glutamate as substrate. The number of glutamate residues added to either RpsF or to poly-alpha-glutamate changes with pH.</text>
</comment>
<comment type="cofactor">
    <cofactor evidence="1">
        <name>Mg(2+)</name>
        <dbReference type="ChEBI" id="CHEBI:18420"/>
    </cofactor>
    <cofactor evidence="1">
        <name>Mn(2+)</name>
        <dbReference type="ChEBI" id="CHEBI:29035"/>
    </cofactor>
    <text evidence="1">Binds 2 magnesium or manganese ions per subunit.</text>
</comment>
<comment type="similarity">
    <text evidence="1">Belongs to the RimK family.</text>
</comment>
<evidence type="ECO:0000255" key="1">
    <source>
        <dbReference type="HAMAP-Rule" id="MF_01552"/>
    </source>
</evidence>
<evidence type="ECO:0000305" key="2"/>
<protein>
    <recommendedName>
        <fullName evidence="1">Ribosomal protein bS6--L-glutamate ligase</fullName>
        <ecNumber evidence="1">6.3.2.-</ecNumber>
    </recommendedName>
    <alternativeName>
        <fullName evidence="1">Poly-alpha-glutamate synthase</fullName>
    </alternativeName>
    <alternativeName>
        <fullName evidence="1">Ribosomal protein bS6 modification protein</fullName>
    </alternativeName>
</protein>
<proteinExistence type="inferred from homology"/>
<gene>
    <name evidence="1" type="primary">rimK</name>
    <name type="ordered locus">STM0875</name>
</gene>
<accession>P0A2U2</accession>
<accession>Q9Z5Z1</accession>
<feature type="chain" id="PRO_0000205481" description="Ribosomal protein bS6--L-glutamate ligase">
    <location>
        <begin position="1"/>
        <end position="300"/>
    </location>
</feature>
<feature type="domain" description="ATP-grasp" evidence="1">
    <location>
        <begin position="104"/>
        <end position="287"/>
    </location>
</feature>
<feature type="binding site" evidence="1">
    <location>
        <position position="141"/>
    </location>
    <ligand>
        <name>ATP</name>
        <dbReference type="ChEBI" id="CHEBI:30616"/>
    </ligand>
</feature>
<feature type="binding site" evidence="1">
    <location>
        <begin position="178"/>
        <end position="179"/>
    </location>
    <ligand>
        <name>ATP</name>
        <dbReference type="ChEBI" id="CHEBI:30616"/>
    </ligand>
</feature>
<feature type="binding site" evidence="1">
    <location>
        <position position="187"/>
    </location>
    <ligand>
        <name>ATP</name>
        <dbReference type="ChEBI" id="CHEBI:30616"/>
    </ligand>
</feature>
<feature type="binding site" evidence="1">
    <location>
        <begin position="211"/>
        <end position="213"/>
    </location>
    <ligand>
        <name>ATP</name>
        <dbReference type="ChEBI" id="CHEBI:30616"/>
    </ligand>
</feature>
<feature type="binding site" evidence="1">
    <location>
        <position position="248"/>
    </location>
    <ligand>
        <name>Mg(2+)</name>
        <dbReference type="ChEBI" id="CHEBI:18420"/>
        <label>1</label>
    </ligand>
</feature>
<feature type="binding site" evidence="1">
    <location>
        <position position="248"/>
    </location>
    <ligand>
        <name>Mn(2+)</name>
        <dbReference type="ChEBI" id="CHEBI:29035"/>
        <label>1</label>
    </ligand>
</feature>
<feature type="binding site" evidence="1">
    <location>
        <position position="260"/>
    </location>
    <ligand>
        <name>Mg(2+)</name>
        <dbReference type="ChEBI" id="CHEBI:18420"/>
        <label>1</label>
    </ligand>
</feature>
<feature type="binding site" evidence="1">
    <location>
        <position position="260"/>
    </location>
    <ligand>
        <name>Mg(2+)</name>
        <dbReference type="ChEBI" id="CHEBI:18420"/>
        <label>2</label>
    </ligand>
</feature>
<feature type="binding site" evidence="1">
    <location>
        <position position="260"/>
    </location>
    <ligand>
        <name>Mn(2+)</name>
        <dbReference type="ChEBI" id="CHEBI:29035"/>
        <label>1</label>
    </ligand>
</feature>
<feature type="binding site" evidence="1">
    <location>
        <position position="260"/>
    </location>
    <ligand>
        <name>Mn(2+)</name>
        <dbReference type="ChEBI" id="CHEBI:29035"/>
        <label>2</label>
    </ligand>
</feature>
<feature type="binding site" evidence="1">
    <location>
        <position position="262"/>
    </location>
    <ligand>
        <name>Mg(2+)</name>
        <dbReference type="ChEBI" id="CHEBI:18420"/>
        <label>2</label>
    </ligand>
</feature>
<feature type="binding site" evidence="1">
    <location>
        <position position="262"/>
    </location>
    <ligand>
        <name>Mn(2+)</name>
        <dbReference type="ChEBI" id="CHEBI:29035"/>
        <label>2</label>
    </ligand>
</feature>
<feature type="sequence conflict" description="In Ref. 2; AAD18028." evidence="2" ref="2">
    <original>G</original>
    <variation>R</variation>
    <location>
        <position position="26"/>
    </location>
</feature>